<accession>P17232</accession>
<sequence length="13" mass="1384">FLPIIGKLLSGLL</sequence>
<feature type="peptide" id="PRO_0000044047" description="Vespid chemotactic peptide M" evidence="5">
    <location>
        <begin position="1"/>
        <end position="13"/>
    </location>
</feature>
<feature type="modified residue" description="Leucine amide" evidence="5">
    <location>
        <position position="13"/>
    </location>
</feature>
<reference key="1">
    <citation type="book" date="1984" name="Peptide chemistry 1983">
        <editorList>
            <person name="Munekata E."/>
        </editorList>
        <authorList>
            <person name="Yasuhara T."/>
            <person name="Nakajima T."/>
            <person name="Fukuda K."/>
            <person name="Tsukamoto Y."/>
            <person name="Mori M."/>
            <person name="Kitada C."/>
            <person name="Fujino M."/>
        </authorList>
    </citation>
    <scope>PROTEIN SEQUENCE</scope>
    <scope>FUNCTION</scope>
    <scope>AMIDATION AT LEU-13</scope>
    <scope>SUBCELLULAR LOCATION</scope>
    <source>
        <tissue>Venom</tissue>
    </source>
</reference>
<dbReference type="GO" id="GO:0005576">
    <property type="term" value="C:extracellular region"/>
    <property type="evidence" value="ECO:0007669"/>
    <property type="project" value="UniProtKB-SubCell"/>
</dbReference>
<dbReference type="GO" id="GO:0090729">
    <property type="term" value="F:toxin activity"/>
    <property type="evidence" value="ECO:0007669"/>
    <property type="project" value="UniProtKB-KW"/>
</dbReference>
<dbReference type="GO" id="GO:0006935">
    <property type="term" value="P:chemotaxis"/>
    <property type="evidence" value="ECO:0007669"/>
    <property type="project" value="UniProtKB-KW"/>
</dbReference>
<dbReference type="GO" id="GO:0042742">
    <property type="term" value="P:defense response to bacterium"/>
    <property type="evidence" value="ECO:0007669"/>
    <property type="project" value="UniProtKB-KW"/>
</dbReference>
<dbReference type="GO" id="GO:0050832">
    <property type="term" value="P:defense response to fungus"/>
    <property type="evidence" value="ECO:0007669"/>
    <property type="project" value="UniProtKB-KW"/>
</dbReference>
<dbReference type="GO" id="GO:0031640">
    <property type="term" value="P:killing of cells of another organism"/>
    <property type="evidence" value="ECO:0007669"/>
    <property type="project" value="UniProtKB-KW"/>
</dbReference>
<evidence type="ECO:0000250" key="1">
    <source>
        <dbReference type="UniProtKB" id="A0SPI1"/>
    </source>
</evidence>
<evidence type="ECO:0000250" key="2">
    <source>
        <dbReference type="UniProtKB" id="P01514"/>
    </source>
</evidence>
<evidence type="ECO:0000250" key="3">
    <source>
        <dbReference type="UniProtKB" id="P0DRA0"/>
    </source>
</evidence>
<evidence type="ECO:0000250" key="4">
    <source>
        <dbReference type="UniProtKB" id="P84914"/>
    </source>
</evidence>
<evidence type="ECO:0000269" key="5">
    <source ref="1"/>
</evidence>
<evidence type="ECO:0000303" key="6">
    <source ref="1"/>
</evidence>
<evidence type="ECO:0000305" key="7"/>
<evidence type="ECO:0000305" key="8">
    <source ref="1"/>
</evidence>
<comment type="function">
    <text evidence="1 2 3 4 5">Antimicrobial peptide with activities against Gram-negative bacteria, Gram-positive bacteria and the fungi C.albicans and C.parapsilosis (By similarity). Exhibits little hemolytic activity against washed human erythrocytes (By similarity). Mast cell degranulating peptide. Induces the chemotaxis of neutrophils (Ref.1). Its mast cell degranulation activity may be related to the activation of G-protein coupled receptors in mast cells as well as interaction with other proteins located in cell endosomal membranes in the mast cells (By similarity).</text>
</comment>
<comment type="subcellular location">
    <subcellularLocation>
        <location evidence="5">Secreted</location>
    </subcellularLocation>
</comment>
<comment type="tissue specificity">
    <text evidence="8">Expressed by the venom gland.</text>
</comment>
<comment type="miscellaneous">
    <text evidence="7">The primary structure of this mature peptide is identical to that of Vespid chemotactic peptide 5h from Vespa magnifica (AC A0SPI1) and Vespid chemotactic peptide VT1 from Vespa tropica (AC P0DRA0).</text>
</comment>
<comment type="similarity">
    <text evidence="7">Belongs to the MCD family. Crabrolin subfamily.</text>
</comment>
<name>CRBL_VESMA</name>
<protein>
    <recommendedName>
        <fullName evidence="6">Vespid chemotactic peptide M</fullName>
        <shortName evidence="6">VESCP-M</shortName>
        <shortName evidence="7">Ves-CP-M</shortName>
    </recommendedName>
</protein>
<organism>
    <name type="scientific">Vespa mandarinia</name>
    <name type="common">Asian giant hornet</name>
    <dbReference type="NCBI Taxonomy" id="7446"/>
    <lineage>
        <taxon>Eukaryota</taxon>
        <taxon>Metazoa</taxon>
        <taxon>Ecdysozoa</taxon>
        <taxon>Arthropoda</taxon>
        <taxon>Hexapoda</taxon>
        <taxon>Insecta</taxon>
        <taxon>Pterygota</taxon>
        <taxon>Neoptera</taxon>
        <taxon>Endopterygota</taxon>
        <taxon>Hymenoptera</taxon>
        <taxon>Apocrita</taxon>
        <taxon>Aculeata</taxon>
        <taxon>Vespoidea</taxon>
        <taxon>Vespidae</taxon>
        <taxon>Vespinae</taxon>
        <taxon>Vespa</taxon>
    </lineage>
</organism>
<proteinExistence type="evidence at protein level"/>
<keyword id="KW-0027">Amidation</keyword>
<keyword id="KW-0044">Antibiotic</keyword>
<keyword id="KW-0929">Antimicrobial</keyword>
<keyword id="KW-0145">Chemotaxis</keyword>
<keyword id="KW-0903">Direct protein sequencing</keyword>
<keyword id="KW-0295">Fungicide</keyword>
<keyword id="KW-1213">G-protein coupled receptor impairing toxin</keyword>
<keyword id="KW-0467">Mast cell degranulation</keyword>
<keyword id="KW-0964">Secreted</keyword>
<keyword id="KW-0800">Toxin</keyword>